<name>LPXA_SINFN</name>
<dbReference type="EC" id="2.3.1.129" evidence="1"/>
<dbReference type="EMBL" id="CP001389">
    <property type="protein sequence ID" value="ACP25124.1"/>
    <property type="molecule type" value="Genomic_DNA"/>
</dbReference>
<dbReference type="RefSeq" id="YP_002825877.1">
    <property type="nucleotide sequence ID" value="NC_012587.1"/>
</dbReference>
<dbReference type="SMR" id="C3MBR2"/>
<dbReference type="STRING" id="394.NGR_c13440"/>
<dbReference type="KEGG" id="rhi:NGR_c13440"/>
<dbReference type="PATRIC" id="fig|394.7.peg.4165"/>
<dbReference type="eggNOG" id="COG1043">
    <property type="taxonomic scope" value="Bacteria"/>
</dbReference>
<dbReference type="HOGENOM" id="CLU_061249_0_0_5"/>
<dbReference type="OrthoDB" id="9807278at2"/>
<dbReference type="UniPathway" id="UPA00359">
    <property type="reaction ID" value="UER00477"/>
</dbReference>
<dbReference type="Proteomes" id="UP000001054">
    <property type="component" value="Chromosome"/>
</dbReference>
<dbReference type="GO" id="GO:0005737">
    <property type="term" value="C:cytoplasm"/>
    <property type="evidence" value="ECO:0007669"/>
    <property type="project" value="UniProtKB-SubCell"/>
</dbReference>
<dbReference type="GO" id="GO:0016020">
    <property type="term" value="C:membrane"/>
    <property type="evidence" value="ECO:0007669"/>
    <property type="project" value="GOC"/>
</dbReference>
<dbReference type="GO" id="GO:0008780">
    <property type="term" value="F:acyl-[acyl-carrier-protein]-UDP-N-acetylglucosamine O-acyltransferase activity"/>
    <property type="evidence" value="ECO:0007669"/>
    <property type="project" value="UniProtKB-UniRule"/>
</dbReference>
<dbReference type="GO" id="GO:0009245">
    <property type="term" value="P:lipid A biosynthetic process"/>
    <property type="evidence" value="ECO:0007669"/>
    <property type="project" value="UniProtKB-UniRule"/>
</dbReference>
<dbReference type="CDD" id="cd03351">
    <property type="entry name" value="LbH_UDP-GlcNAc_AT"/>
    <property type="match status" value="1"/>
</dbReference>
<dbReference type="Gene3D" id="2.160.10.10">
    <property type="entry name" value="Hexapeptide repeat proteins"/>
    <property type="match status" value="1"/>
</dbReference>
<dbReference type="Gene3D" id="1.20.1180.10">
    <property type="entry name" value="Udp N-acetylglucosamine O-acyltransferase, C-terminal domain"/>
    <property type="match status" value="1"/>
</dbReference>
<dbReference type="HAMAP" id="MF_00387">
    <property type="entry name" value="LpxA"/>
    <property type="match status" value="1"/>
</dbReference>
<dbReference type="InterPro" id="IPR029098">
    <property type="entry name" value="Acetyltransf_C"/>
</dbReference>
<dbReference type="InterPro" id="IPR037157">
    <property type="entry name" value="Acetyltransf_C_sf"/>
</dbReference>
<dbReference type="InterPro" id="IPR001451">
    <property type="entry name" value="Hexapep"/>
</dbReference>
<dbReference type="InterPro" id="IPR018357">
    <property type="entry name" value="Hexapep_transf_CS"/>
</dbReference>
<dbReference type="InterPro" id="IPR010137">
    <property type="entry name" value="Lipid_A_LpxA"/>
</dbReference>
<dbReference type="InterPro" id="IPR011004">
    <property type="entry name" value="Trimer_LpxA-like_sf"/>
</dbReference>
<dbReference type="NCBIfam" id="TIGR01852">
    <property type="entry name" value="lipid_A_lpxA"/>
    <property type="match status" value="1"/>
</dbReference>
<dbReference type="NCBIfam" id="NF003657">
    <property type="entry name" value="PRK05289.1"/>
    <property type="match status" value="1"/>
</dbReference>
<dbReference type="PANTHER" id="PTHR43480">
    <property type="entry name" value="ACYL-[ACYL-CARRIER-PROTEIN]--UDP-N-ACETYLGLUCOSAMINE O-ACYLTRANSFERASE"/>
    <property type="match status" value="1"/>
</dbReference>
<dbReference type="PANTHER" id="PTHR43480:SF1">
    <property type="entry name" value="ACYL-[ACYL-CARRIER-PROTEIN]--UDP-N-ACETYLGLUCOSAMINE O-ACYLTRANSFERASE, MITOCHONDRIAL-RELATED"/>
    <property type="match status" value="1"/>
</dbReference>
<dbReference type="Pfam" id="PF13720">
    <property type="entry name" value="Acetyltransf_11"/>
    <property type="match status" value="1"/>
</dbReference>
<dbReference type="Pfam" id="PF00132">
    <property type="entry name" value="Hexapep"/>
    <property type="match status" value="2"/>
</dbReference>
<dbReference type="PIRSF" id="PIRSF000456">
    <property type="entry name" value="UDP-GlcNAc_acltr"/>
    <property type="match status" value="1"/>
</dbReference>
<dbReference type="SUPFAM" id="SSF51161">
    <property type="entry name" value="Trimeric LpxA-like enzymes"/>
    <property type="match status" value="1"/>
</dbReference>
<dbReference type="PROSITE" id="PS00101">
    <property type="entry name" value="HEXAPEP_TRANSFERASES"/>
    <property type="match status" value="1"/>
</dbReference>
<feature type="chain" id="PRO_1000134388" description="Acyl-[acyl-carrier-protein]--UDP-N-acetylglucosamine O-acyltransferase">
    <location>
        <begin position="1"/>
        <end position="270"/>
    </location>
</feature>
<organism>
    <name type="scientific">Sinorhizobium fredii (strain NBRC 101917 / NGR234)</name>
    <dbReference type="NCBI Taxonomy" id="394"/>
    <lineage>
        <taxon>Bacteria</taxon>
        <taxon>Pseudomonadati</taxon>
        <taxon>Pseudomonadota</taxon>
        <taxon>Alphaproteobacteria</taxon>
        <taxon>Hyphomicrobiales</taxon>
        <taxon>Rhizobiaceae</taxon>
        <taxon>Sinorhizobium/Ensifer group</taxon>
        <taxon>Sinorhizobium</taxon>
    </lineage>
</organism>
<proteinExistence type="inferred from homology"/>
<sequence>MVVSSAKIHPASVVEDGAVIGENVKVGPFCHIGPNVVLGDGVELLSHVVVIGRTTIGKGTKIFPGAVIGGDSQSVHHSAVDTTLVIGENCTIREGVTMNTGTVEHGGTTVVGNNNLFLAYSHVAHDCRLGNNIILSNNVMLAGHVTVEDRAILGGGSAVHQFTRVGKQAFIGGLSAVSYDVIPYGMLNGNPGVLSGLNVVGMTRAGFERPVIHAVRRCYKQIFEGPESIRANAAAVRDEYLDCPPAMEILDFIAAESDRALSSPNRGGKG</sequence>
<keyword id="KW-0012">Acyltransferase</keyword>
<keyword id="KW-0963">Cytoplasm</keyword>
<keyword id="KW-0441">Lipid A biosynthesis</keyword>
<keyword id="KW-0444">Lipid biosynthesis</keyword>
<keyword id="KW-0443">Lipid metabolism</keyword>
<keyword id="KW-1185">Reference proteome</keyword>
<keyword id="KW-0677">Repeat</keyword>
<keyword id="KW-0808">Transferase</keyword>
<evidence type="ECO:0000255" key="1">
    <source>
        <dbReference type="HAMAP-Rule" id="MF_00387"/>
    </source>
</evidence>
<reference key="1">
    <citation type="journal article" date="2009" name="Appl. Environ. Microbiol.">
        <title>Rhizobium sp. strain NGR234 possesses a remarkable number of secretion systems.</title>
        <authorList>
            <person name="Schmeisser C."/>
            <person name="Liesegang H."/>
            <person name="Krysciak D."/>
            <person name="Bakkou N."/>
            <person name="Le Quere A."/>
            <person name="Wollherr A."/>
            <person name="Heinemeyer I."/>
            <person name="Morgenstern B."/>
            <person name="Pommerening-Roeser A."/>
            <person name="Flores M."/>
            <person name="Palacios R."/>
            <person name="Brenner S."/>
            <person name="Gottschalk G."/>
            <person name="Schmitz R.A."/>
            <person name="Broughton W.J."/>
            <person name="Perret X."/>
            <person name="Strittmatter A.W."/>
            <person name="Streit W.R."/>
        </authorList>
    </citation>
    <scope>NUCLEOTIDE SEQUENCE [LARGE SCALE GENOMIC DNA]</scope>
    <source>
        <strain>NBRC 101917 / NGR234</strain>
    </source>
</reference>
<gene>
    <name evidence="1" type="primary">lpxA</name>
    <name type="ordered locus">NGR_c13440</name>
</gene>
<protein>
    <recommendedName>
        <fullName evidence="1">Acyl-[acyl-carrier-protein]--UDP-N-acetylglucosamine O-acyltransferase</fullName>
        <shortName evidence="1">UDP-N-acetylglucosamine acyltransferase</shortName>
        <ecNumber evidence="1">2.3.1.129</ecNumber>
    </recommendedName>
</protein>
<accession>C3MBR2</accession>
<comment type="function">
    <text evidence="1">Involved in the biosynthesis of lipid A, a phosphorylated glycolipid that anchors the lipopolysaccharide to the outer membrane of the cell.</text>
</comment>
<comment type="catalytic activity">
    <reaction evidence="1">
        <text>a (3R)-hydroxyacyl-[ACP] + UDP-N-acetyl-alpha-D-glucosamine = a UDP-3-O-[(3R)-3-hydroxyacyl]-N-acetyl-alpha-D-glucosamine + holo-[ACP]</text>
        <dbReference type="Rhea" id="RHEA:67812"/>
        <dbReference type="Rhea" id="RHEA-COMP:9685"/>
        <dbReference type="Rhea" id="RHEA-COMP:9945"/>
        <dbReference type="ChEBI" id="CHEBI:57705"/>
        <dbReference type="ChEBI" id="CHEBI:64479"/>
        <dbReference type="ChEBI" id="CHEBI:78827"/>
        <dbReference type="ChEBI" id="CHEBI:173225"/>
        <dbReference type="EC" id="2.3.1.129"/>
    </reaction>
</comment>
<comment type="pathway">
    <text evidence="1">Glycolipid biosynthesis; lipid IV(A) biosynthesis; lipid IV(A) from (3R)-3-hydroxytetradecanoyl-[acyl-carrier-protein] and UDP-N-acetyl-alpha-D-glucosamine: step 1/6.</text>
</comment>
<comment type="subunit">
    <text evidence="1">Homotrimer.</text>
</comment>
<comment type="subcellular location">
    <subcellularLocation>
        <location evidence="1">Cytoplasm</location>
    </subcellularLocation>
</comment>
<comment type="similarity">
    <text evidence="1">Belongs to the transferase hexapeptide repeat family. LpxA subfamily.</text>
</comment>